<comment type="subcellular location">
    <subcellularLocation>
        <location>Cell inner membrane</location>
        <topology>Multi-pass membrane protein</topology>
    </subcellularLocation>
</comment>
<feature type="chain" id="PRO_0000169412" description="Inner membrane protein YgiZ">
    <location>
        <begin position="1"/>
        <end position="110"/>
    </location>
</feature>
<feature type="topological domain" description="Cytoplasmic" evidence="1">
    <location>
        <begin position="1"/>
        <end position="8"/>
    </location>
</feature>
<feature type="transmembrane region" description="Helical" evidence="1">
    <location>
        <begin position="9"/>
        <end position="29"/>
    </location>
</feature>
<feature type="topological domain" description="Periplasmic" evidence="1">
    <location>
        <begin position="30"/>
        <end position="53"/>
    </location>
</feature>
<feature type="transmembrane region" description="Helical" evidence="1">
    <location>
        <begin position="54"/>
        <end position="74"/>
    </location>
</feature>
<feature type="topological domain" description="Cytoplasmic" evidence="1">
    <location>
        <begin position="75"/>
        <end position="83"/>
    </location>
</feature>
<feature type="transmembrane region" description="Helical" evidence="1">
    <location>
        <begin position="84"/>
        <end position="104"/>
    </location>
</feature>
<feature type="topological domain" description="Periplasmic" evidence="1">
    <location>
        <begin position="105"/>
        <end position="110"/>
    </location>
</feature>
<organism>
    <name type="scientific">Escherichia coli (strain K12)</name>
    <dbReference type="NCBI Taxonomy" id="83333"/>
    <lineage>
        <taxon>Bacteria</taxon>
        <taxon>Pseudomonadati</taxon>
        <taxon>Pseudomonadota</taxon>
        <taxon>Gammaproteobacteria</taxon>
        <taxon>Enterobacterales</taxon>
        <taxon>Enterobacteriaceae</taxon>
        <taxon>Escherichia</taxon>
    </lineage>
</organism>
<keyword id="KW-0997">Cell inner membrane</keyword>
<keyword id="KW-1003">Cell membrane</keyword>
<keyword id="KW-0472">Membrane</keyword>
<keyword id="KW-1185">Reference proteome</keyword>
<keyword id="KW-0812">Transmembrane</keyword>
<keyword id="KW-1133">Transmembrane helix</keyword>
<reference key="1">
    <citation type="journal article" date="1997" name="Science">
        <title>The complete genome sequence of Escherichia coli K-12.</title>
        <authorList>
            <person name="Blattner F.R."/>
            <person name="Plunkett G. III"/>
            <person name="Bloch C.A."/>
            <person name="Perna N.T."/>
            <person name="Burland V."/>
            <person name="Riley M."/>
            <person name="Collado-Vides J."/>
            <person name="Glasner J.D."/>
            <person name="Rode C.K."/>
            <person name="Mayhew G.F."/>
            <person name="Gregor J."/>
            <person name="Davis N.W."/>
            <person name="Kirkpatrick H.A."/>
            <person name="Goeden M.A."/>
            <person name="Rose D.J."/>
            <person name="Mau B."/>
            <person name="Shao Y."/>
        </authorList>
    </citation>
    <scope>NUCLEOTIDE SEQUENCE [LARGE SCALE GENOMIC DNA]</scope>
    <source>
        <strain>K12 / MG1655 / ATCC 47076</strain>
    </source>
</reference>
<reference key="2">
    <citation type="journal article" date="2006" name="Mol. Syst. Biol.">
        <title>Highly accurate genome sequences of Escherichia coli K-12 strains MG1655 and W3110.</title>
        <authorList>
            <person name="Hayashi K."/>
            <person name="Morooka N."/>
            <person name="Yamamoto Y."/>
            <person name="Fujita K."/>
            <person name="Isono K."/>
            <person name="Choi S."/>
            <person name="Ohtsubo E."/>
            <person name="Baba T."/>
            <person name="Wanner B.L."/>
            <person name="Mori H."/>
            <person name="Horiuchi T."/>
        </authorList>
    </citation>
    <scope>NUCLEOTIDE SEQUENCE [LARGE SCALE GENOMIC DNA]</scope>
    <source>
        <strain>K12 / W3110 / ATCC 27325 / DSM 5911</strain>
    </source>
</reference>
<reference key="3">
    <citation type="journal article" date="2005" name="Science">
        <title>Global topology analysis of the Escherichia coli inner membrane proteome.</title>
        <authorList>
            <person name="Daley D.O."/>
            <person name="Rapp M."/>
            <person name="Granseth E."/>
            <person name="Melen K."/>
            <person name="Drew D."/>
            <person name="von Heijne G."/>
        </authorList>
    </citation>
    <scope>TOPOLOGY [LARGE SCALE ANALYSIS]</scope>
    <source>
        <strain>K12 / MG1655 / ATCC 47076</strain>
    </source>
</reference>
<name>YGIZ_ECOLI</name>
<evidence type="ECO:0000255" key="1"/>
<accession>Q46867</accession>
<accession>Q2M9H3</accession>
<dbReference type="EMBL" id="U28377">
    <property type="protein sequence ID" value="AAA69195.1"/>
    <property type="molecule type" value="Genomic_DNA"/>
</dbReference>
<dbReference type="EMBL" id="U00096">
    <property type="protein sequence ID" value="AAC76063.1"/>
    <property type="molecule type" value="Genomic_DNA"/>
</dbReference>
<dbReference type="EMBL" id="AP009048">
    <property type="protein sequence ID" value="BAE77083.1"/>
    <property type="molecule type" value="Genomic_DNA"/>
</dbReference>
<dbReference type="PIR" id="A65090">
    <property type="entry name" value="A65090"/>
</dbReference>
<dbReference type="RefSeq" id="NP_417499.1">
    <property type="nucleotide sequence ID" value="NC_000913.3"/>
</dbReference>
<dbReference type="RefSeq" id="WP_000917684.1">
    <property type="nucleotide sequence ID" value="NZ_LN832404.1"/>
</dbReference>
<dbReference type="BioGRID" id="4263115">
    <property type="interactions" value="9"/>
</dbReference>
<dbReference type="BioGRID" id="850804">
    <property type="interactions" value="3"/>
</dbReference>
<dbReference type="FunCoup" id="Q46867">
    <property type="interactions" value="132"/>
</dbReference>
<dbReference type="IntAct" id="Q46867">
    <property type="interactions" value="3"/>
</dbReference>
<dbReference type="STRING" id="511145.b3027"/>
<dbReference type="TCDB" id="9.B.444.1.1">
    <property type="family name" value="the uncharacterized yjeo/ygiz (yjeo/ygiz) family"/>
</dbReference>
<dbReference type="PaxDb" id="511145-b3027"/>
<dbReference type="DNASU" id="946450"/>
<dbReference type="EnsemblBacteria" id="AAC76063">
    <property type="protein sequence ID" value="AAC76063"/>
    <property type="gene ID" value="b3027"/>
</dbReference>
<dbReference type="GeneID" id="946450"/>
<dbReference type="KEGG" id="ecj:JW2995"/>
<dbReference type="KEGG" id="eco:b3027"/>
<dbReference type="KEGG" id="ecoc:C3026_16535"/>
<dbReference type="PATRIC" id="fig|83333.103.peg.3928"/>
<dbReference type="EchoBASE" id="EB2846"/>
<dbReference type="eggNOG" id="ENOG5032ZED">
    <property type="taxonomic scope" value="Bacteria"/>
</dbReference>
<dbReference type="HOGENOM" id="CLU_173277_0_0_6"/>
<dbReference type="InParanoid" id="Q46867"/>
<dbReference type="OMA" id="SICSIPH"/>
<dbReference type="OrthoDB" id="6497428at2"/>
<dbReference type="BioCyc" id="EcoCyc:G7577-MONOMER"/>
<dbReference type="PRO" id="PR:Q46867"/>
<dbReference type="Proteomes" id="UP000000625">
    <property type="component" value="Chromosome"/>
</dbReference>
<dbReference type="GO" id="GO:0005886">
    <property type="term" value="C:plasma membrane"/>
    <property type="evidence" value="ECO:0000314"/>
    <property type="project" value="EcoCyc"/>
</dbReference>
<dbReference type="InterPro" id="IPR022553">
    <property type="entry name" value="DUF2645"/>
</dbReference>
<dbReference type="Pfam" id="PF10840">
    <property type="entry name" value="DUF2645"/>
    <property type="match status" value="1"/>
</dbReference>
<gene>
    <name type="primary">ygiZ</name>
    <name type="ordered locus">b3027</name>
    <name type="ordered locus">JW2995</name>
</gene>
<sequence length="110" mass="13201">MLKQKIKTIFEALLYIMLTYWLIDSFFAFNKYDWMLESGGNICSIPSVSGEDRILQAMIAAFFLLTPLIILILRKLFMREMFEFWVYVFSLGICLVCGWWLFWGRFIFCY</sequence>
<proteinExistence type="evidence at protein level"/>
<protein>
    <recommendedName>
        <fullName>Inner membrane protein YgiZ</fullName>
    </recommendedName>
</protein>